<sequence length="18" mass="1958">VKVGINGFGRIGRXVFRA</sequence>
<comment type="catalytic activity">
    <reaction evidence="2">
        <text>D-glyceraldehyde 3-phosphate + phosphate + NAD(+) = (2R)-3-phospho-glyceroyl phosphate + NADH + H(+)</text>
        <dbReference type="Rhea" id="RHEA:10300"/>
        <dbReference type="ChEBI" id="CHEBI:15378"/>
        <dbReference type="ChEBI" id="CHEBI:43474"/>
        <dbReference type="ChEBI" id="CHEBI:57540"/>
        <dbReference type="ChEBI" id="CHEBI:57604"/>
        <dbReference type="ChEBI" id="CHEBI:57945"/>
        <dbReference type="ChEBI" id="CHEBI:59776"/>
        <dbReference type="EC" id="1.2.1.12"/>
    </reaction>
</comment>
<comment type="pathway">
    <text>Carbohydrate degradation; glycolysis; pyruvate from D-glyceraldehyde 3-phosphate: step 1/5.</text>
</comment>
<comment type="subunit">
    <text evidence="1">Homotetramer.</text>
</comment>
<comment type="subcellular location">
    <subcellularLocation>
        <location evidence="1">Cytoplasm</location>
    </subcellularLocation>
</comment>
<comment type="miscellaneous">
    <text>On the 2D-gel the determined pI of this protein is: 7.0, its MW is: 37.5 kDa.</text>
</comment>
<comment type="similarity">
    <text evidence="3">Belongs to the glyceraldehyde-3-phosphate dehydrogenase family.</text>
</comment>
<organism>
    <name type="scientific">Naegleria fowleri</name>
    <name type="common">Brain eating amoeba</name>
    <dbReference type="NCBI Taxonomy" id="5763"/>
    <lineage>
        <taxon>Eukaryota</taxon>
        <taxon>Discoba</taxon>
        <taxon>Heterolobosea</taxon>
        <taxon>Tetramitia</taxon>
        <taxon>Eutetramitia</taxon>
        <taxon>Vahlkampfiidae</taxon>
        <taxon>Naegleria</taxon>
    </lineage>
</organism>
<feature type="chain" id="PRO_0000145518" description="Glyceraldehyde-3-phosphate dehydrogenase">
    <location>
        <begin position="1"/>
        <end position="18" status="greater than"/>
    </location>
</feature>
<feature type="binding site" evidence="1">
    <location>
        <begin position="10"/>
        <end position="11"/>
    </location>
    <ligand>
        <name>NAD(+)</name>
        <dbReference type="ChEBI" id="CHEBI:57540"/>
    </ligand>
</feature>
<feature type="non-terminal residue">
    <location>
        <position position="18"/>
    </location>
</feature>
<name>G3P_NAEFO</name>
<dbReference type="EC" id="1.2.1.12"/>
<dbReference type="UniPathway" id="UPA00109">
    <property type="reaction ID" value="UER00184"/>
</dbReference>
<dbReference type="GO" id="GO:0005737">
    <property type="term" value="C:cytoplasm"/>
    <property type="evidence" value="ECO:0007669"/>
    <property type="project" value="UniProtKB-SubCell"/>
</dbReference>
<dbReference type="GO" id="GO:0004365">
    <property type="term" value="F:glyceraldehyde-3-phosphate dehydrogenase (NAD+) (phosphorylating) activity"/>
    <property type="evidence" value="ECO:0007669"/>
    <property type="project" value="UniProtKB-EC"/>
</dbReference>
<dbReference type="GO" id="GO:0006096">
    <property type="term" value="P:glycolytic process"/>
    <property type="evidence" value="ECO:0007669"/>
    <property type="project" value="UniProtKB-UniPathway"/>
</dbReference>
<dbReference type="Gene3D" id="3.40.50.720">
    <property type="entry name" value="NAD(P)-binding Rossmann-like Domain"/>
    <property type="match status" value="1"/>
</dbReference>
<dbReference type="InterPro" id="IPR036291">
    <property type="entry name" value="NAD(P)-bd_dom_sf"/>
</dbReference>
<dbReference type="SUPFAM" id="SSF51735">
    <property type="entry name" value="NAD(P)-binding Rossmann-fold domains"/>
    <property type="match status" value="1"/>
</dbReference>
<evidence type="ECO:0000250" key="1"/>
<evidence type="ECO:0000255" key="2">
    <source>
        <dbReference type="PROSITE-ProRule" id="PRU10009"/>
    </source>
</evidence>
<evidence type="ECO:0000305" key="3"/>
<protein>
    <recommendedName>
        <fullName>Glyceraldehyde-3-phosphate dehydrogenase</fullName>
        <shortName>GAPDH</shortName>
        <ecNumber>1.2.1.12</ecNumber>
    </recommendedName>
</protein>
<accession>P83601</accession>
<reference key="1">
    <citation type="submission" date="2003-05" db="UniProtKB">
        <title>Comparative study of protein profiles on pathogenic and nonpathogenic Naegleria species by 2D-PAGE.</title>
        <authorList>
            <person name="Omura M."/>
            <person name="Furushima-Shimogawara R."/>
            <person name="Izumiyama S."/>
            <person name="Endo T."/>
        </authorList>
    </citation>
    <scope>PROTEIN SEQUENCE</scope>
    <source>
        <strain>ATCC 30214 / Nf 66</strain>
    </source>
</reference>
<keyword id="KW-0963">Cytoplasm</keyword>
<keyword id="KW-0903">Direct protein sequencing</keyword>
<keyword id="KW-0324">Glycolysis</keyword>
<keyword id="KW-0520">NAD</keyword>
<keyword id="KW-0560">Oxidoreductase</keyword>
<proteinExistence type="evidence at protein level"/>